<feature type="signal peptide" evidence="6">
    <location>
        <begin position="1"/>
        <end position="26"/>
    </location>
</feature>
<feature type="chain" id="PRO_0000011578" description="Glutamate receptor ionotropic, NMDA 2B">
    <location>
        <begin position="27"/>
        <end position="1482"/>
    </location>
</feature>
<feature type="topological domain" description="Extracellular" evidence="4">
    <location>
        <begin position="27"/>
        <end position="557"/>
    </location>
</feature>
<feature type="transmembrane region" description="Helical" evidence="4">
    <location>
        <begin position="558"/>
        <end position="576"/>
    </location>
</feature>
<feature type="topological domain" description="Cytoplasmic" evidence="4">
    <location>
        <begin position="577"/>
        <end position="603"/>
    </location>
</feature>
<feature type="intramembrane region" description="Discontinuously helical" evidence="4">
    <location>
        <begin position="604"/>
        <end position="623"/>
    </location>
</feature>
<feature type="topological domain" description="Cytoplasmic" evidence="4">
    <location>
        <begin position="624"/>
        <end position="630"/>
    </location>
</feature>
<feature type="transmembrane region" description="Helical" evidence="4">
    <location>
        <begin position="631"/>
        <end position="646"/>
    </location>
</feature>
<feature type="topological domain" description="Extracellular" evidence="4">
    <location>
        <begin position="647"/>
        <end position="817"/>
    </location>
</feature>
<feature type="transmembrane region" description="Helical" evidence="4">
    <location>
        <begin position="818"/>
        <end position="837"/>
    </location>
</feature>
<feature type="topological domain" description="Cytoplasmic" evidence="4">
    <location>
        <begin position="838"/>
        <end position="1482"/>
    </location>
</feature>
<feature type="region of interest" description="Pore-forming" evidence="2">
    <location>
        <begin position="604"/>
        <end position="623"/>
    </location>
</feature>
<feature type="region of interest" description="Disordered" evidence="7">
    <location>
        <begin position="1074"/>
        <end position="1097"/>
    </location>
</feature>
<feature type="region of interest" description="Disordered" evidence="7">
    <location>
        <begin position="1162"/>
        <end position="1194"/>
    </location>
</feature>
<feature type="region of interest" description="Disordered" evidence="7">
    <location>
        <begin position="1266"/>
        <end position="1301"/>
    </location>
</feature>
<feature type="region of interest" description="Interaction with DAPK1" evidence="15">
    <location>
        <begin position="1292"/>
        <end position="1304"/>
    </location>
</feature>
<feature type="short sequence motif" description="PDZ-binding" evidence="1">
    <location>
        <begin position="1480"/>
        <end position="1482"/>
    </location>
</feature>
<feature type="compositionally biased region" description="Low complexity" evidence="7">
    <location>
        <begin position="1266"/>
        <end position="1277"/>
    </location>
</feature>
<feature type="compositionally biased region" description="Polar residues" evidence="7">
    <location>
        <begin position="1278"/>
        <end position="1289"/>
    </location>
</feature>
<feature type="compositionally biased region" description="Basic residues" evidence="7">
    <location>
        <begin position="1290"/>
        <end position="1301"/>
    </location>
</feature>
<feature type="binding site" evidence="4">
    <location>
        <position position="127"/>
    </location>
    <ligand>
        <name>Zn(2+)</name>
        <dbReference type="ChEBI" id="CHEBI:29105"/>
        <label>1</label>
        <note>inhibitor</note>
    </ligand>
</feature>
<feature type="binding site" evidence="4">
    <location>
        <position position="284"/>
    </location>
    <ligand>
        <name>Zn(2+)</name>
        <dbReference type="ChEBI" id="CHEBI:29105"/>
        <label>1</label>
        <note>inhibitor</note>
    </ligand>
</feature>
<feature type="binding site" evidence="4">
    <location>
        <position position="514"/>
    </location>
    <ligand>
        <name>L-glutamate</name>
        <dbReference type="ChEBI" id="CHEBI:29985"/>
    </ligand>
</feature>
<feature type="binding site" evidence="4">
    <location>
        <position position="519"/>
    </location>
    <ligand>
        <name>L-glutamate</name>
        <dbReference type="ChEBI" id="CHEBI:29985"/>
    </ligand>
</feature>
<feature type="binding site" evidence="4">
    <location>
        <begin position="690"/>
        <end position="691"/>
    </location>
    <ligand>
        <name>L-glutamate</name>
        <dbReference type="ChEBI" id="CHEBI:29985"/>
    </ligand>
</feature>
<feature type="binding site" evidence="4">
    <location>
        <position position="732"/>
    </location>
    <ligand>
        <name>L-glutamate</name>
        <dbReference type="ChEBI" id="CHEBI:29985"/>
    </ligand>
</feature>
<feature type="site" description="Functional determinant of NMDA receptors" evidence="1">
    <location>
        <position position="615"/>
    </location>
</feature>
<feature type="modified residue" description="Phosphoserine" evidence="29">
    <location>
        <position position="882"/>
    </location>
</feature>
<feature type="modified residue" description="Phosphoserine" evidence="4">
    <location>
        <position position="886"/>
    </location>
</feature>
<feature type="modified residue" description="Phosphoserine" evidence="29">
    <location>
        <position position="917"/>
    </location>
</feature>
<feature type="modified residue" description="Phosphoserine" evidence="29">
    <location>
        <position position="920"/>
    </location>
</feature>
<feature type="modified residue" description="Phosphotyrosine" evidence="28">
    <location>
        <position position="962"/>
    </location>
</feature>
<feature type="modified residue" description="Phosphotyrosine" evidence="28">
    <location>
        <position position="1039"/>
    </location>
</feature>
<feature type="modified residue" description="Phosphoserine" evidence="29">
    <location>
        <position position="1058"/>
    </location>
</feature>
<feature type="modified residue" description="Phosphoserine" evidence="29">
    <location>
        <position position="1061"/>
    </location>
</feature>
<feature type="modified residue" description="Phosphoserine" evidence="29">
    <location>
        <position position="1064"/>
    </location>
</feature>
<feature type="modified residue" description="Phosphotyrosine" evidence="28">
    <location>
        <position position="1109"/>
    </location>
</feature>
<feature type="modified residue" description="Phosphotyrosine" evidence="28">
    <location>
        <position position="1133"/>
    </location>
</feature>
<feature type="modified residue" description="Phosphoserine" evidence="29">
    <location>
        <position position="1143"/>
    </location>
</feature>
<feature type="modified residue" description="Phosphotyrosine" evidence="28">
    <location>
        <position position="1155"/>
    </location>
</feature>
<feature type="modified residue" description="Phosphoserine" evidence="29">
    <location>
        <position position="1255"/>
    </location>
</feature>
<feature type="modified residue" description="Phosphoserine" evidence="29">
    <location>
        <position position="1259"/>
    </location>
</feature>
<feature type="modified residue" description="Phosphoserine; by DAPK1" evidence="15 29">
    <location>
        <position position="1303"/>
    </location>
</feature>
<feature type="modified residue" description="Phosphotyrosine" evidence="10">
    <location>
        <position position="1472"/>
    </location>
</feature>
<feature type="glycosylation site" description="N-linked (GlcNAc...) asparagine" evidence="6">
    <location>
        <position position="74"/>
    </location>
</feature>
<feature type="glycosylation site" description="N-linked (GlcNAc...) asparagine" evidence="6">
    <location>
        <position position="341"/>
    </location>
</feature>
<feature type="glycosylation site" description="N-linked (GlcNAc...) asparagine" evidence="6">
    <location>
        <position position="348"/>
    </location>
</feature>
<feature type="glycosylation site" description="N-linked (GlcNAc...) asparagine" evidence="6">
    <location>
        <position position="444"/>
    </location>
</feature>
<feature type="glycosylation site" description="N-linked (GlcNAc...) asparagine" evidence="6">
    <location>
        <position position="491"/>
    </location>
</feature>
<feature type="glycosylation site" description="N-linked (GlcNAc...) asparagine" evidence="6">
    <location>
        <position position="542"/>
    </location>
</feature>
<feature type="glycosylation site" description="N-linked (GlcNAc...) asparagine" evidence="6">
    <location>
        <position position="688"/>
    </location>
</feature>
<feature type="disulfide bond" evidence="4">
    <location>
        <begin position="86"/>
        <end position="321"/>
    </location>
</feature>
<feature type="disulfide bond" evidence="4">
    <location>
        <begin position="429"/>
        <end position="456"/>
    </location>
</feature>
<feature type="disulfide bond" evidence="4">
    <location>
        <begin position="436"/>
        <end position="457"/>
    </location>
</feature>
<feature type="disulfide bond" evidence="4">
    <location>
        <begin position="746"/>
        <end position="801"/>
    </location>
</feature>
<feature type="sequence conflict" description="In Ref. 3; BAB22483." evidence="25" ref="3">
    <original>L</original>
    <variation>F</variation>
    <location>
        <position position="99"/>
    </location>
</feature>
<comment type="function">
    <text evidence="3 5 11 15 16 20 21 26">Component of N-methyl-D-aspartate (NMDA) receptors (NMDARs) that function as heterotetrameric, ligand-gated cation channels with high calcium permeability and voltage-dependent block by Mg(2+) (PubMed:26912815). Participates in synaptic plasticity for learning and memory formation by contributing to the long-term depression (LTD) of hippocampus membrane currents (PubMed:8789948). Channel activation requires binding of the neurotransmitter L-glutamate to the GluN2 subunit, glycine or D-serine binding to the GluN1 subunit, plus membrane depolarization to eliminate channel inhibition by Mg(2+) (Probable) (PubMed:1377365, PubMed:20141836, PubMed:7790891). NMDARs mediate simultaneously the potasium efflux and the influx of calcium and sodium (By similarity). Each GluN2 subunit confers differential attributes to channel properties, including activation, deactivation and desensitization kinetics, pH sensitivity, Ca2(+) permeability, and binding to allosteric modulators (By similarity). In concert with DAPK1 at extrasynaptic sites, acts as a central mediator for stroke damage (PubMed:20141836). Its phosphorylation at Ser-1303 by DAPK1 enhances synaptic NMDA receptor channel activity inducing injurious Ca2+ influx through them, resulting in an irreversible neuronal death (PubMed:20141836).</text>
</comment>
<comment type="catalytic activity">
    <reaction evidence="11 15 16">
        <text>Ca(2+)(in) = Ca(2+)(out)</text>
        <dbReference type="Rhea" id="RHEA:29671"/>
        <dbReference type="ChEBI" id="CHEBI:29108"/>
    </reaction>
</comment>
<comment type="catalytic activity">
    <reaction evidence="5">
        <text>Na(+)(in) = Na(+)(out)</text>
        <dbReference type="Rhea" id="RHEA:34963"/>
        <dbReference type="ChEBI" id="CHEBI:29101"/>
    </reaction>
</comment>
<comment type="catalytic activity">
    <reaction evidence="3">
        <text>K(+)(in) = K(+)(out)</text>
        <dbReference type="Rhea" id="RHEA:29463"/>
        <dbReference type="ChEBI" id="CHEBI:29103"/>
    </reaction>
</comment>
<comment type="subunit">
    <text evidence="4 5 9 11 12 13 14 15 16 17 18 19">Heterotetramer. Forms heterotetrameric channels composed of two GluN1/zeta subunits (GRIN1), and two identical GluN2/epsilon subunits (GRIN2A, GRIN2B, GRIN2C or GRIN2D) or GluN3 subunits (GRIN3A or GRIN3B) (in vitro) (PubMed:1377365, PubMed:26912815). Can also form heterotetrameric channels that contain at least two GluN1 subunits and at least two different GluN2 subunits (or a combination of one GluN2 and one GluN3 subunits) (in vitro) (PubMed:12008020, PubMed:14602821). In vivo, the subunit composition may depend on the expression levels of the different subunits (Probable). Found in a complex with GRIN1, GRIN3A and PPP2CB (By similarity). Interacts with MAGI3 (By similarity). Interacts with HIP1 and NETO1 (PubMed:17329427, PubMed:19243221). Interacts with PDZ domains of PATJ, DLG3 and DLG4. Interacts with DAPK1 (PubMed:20141836). Found in a complex with GRIN1 and PRR7. Interacts with PRR7 (By similarity). Interacts with CAMK2A (By similarity). Interacts with ARC; preventing ARC oligomerization (By similarity). Interacts with TMEM25 (PubMed:31424425). Interacts (via the extreme C-terminus) with FRMPD2 (via the second PDZ domain); the interaction is direct and is likely to promote NMDAR-mediated neural signal transmission (PubMed:31196628). GRIN2A binds FRMPD2 with lower affinity than GRIN2B (PubMed:31196628). Interacts with FAM81A; the interaction facilitates condensate formation via liquid-liquid phase separation (PubMed:38452102).</text>
</comment>
<comment type="interaction">
    <interactant intactId="EBI-400125">
        <id>Q01097</id>
    </interactant>
    <interactant intactId="EBI-299169">
        <id>Q9JI91</id>
        <label>Actn2</label>
    </interactant>
    <organismsDiffer>false</organismsDiffer>
    <experiments>2</experiments>
</comment>
<comment type="interaction">
    <interactant intactId="EBI-400125">
        <id>Q01097</id>
    </interactant>
    <interactant intactId="EBI-775189">
        <id>P17426</id>
        <label>Ap2a1</label>
    </interactant>
    <organismsDiffer>false</organismsDiffer>
    <experiments>2</experiments>
</comment>
<comment type="interaction">
    <interactant intactId="EBI-400125">
        <id>Q01097</id>
    </interactant>
    <interactant intactId="EBI-400384">
        <id>P11798</id>
        <label>Camk2a</label>
    </interactant>
    <organismsDiffer>false</organismsDiffer>
    <experiments>5</experiments>
</comment>
<comment type="interaction">
    <interactant intactId="EBI-400125">
        <id>Q01097</id>
    </interactant>
    <interactant intactId="EBI-2584874">
        <id>Q80YE7</id>
        <label>Dapk1</label>
    </interactant>
    <organismsDiffer>false</organismsDiffer>
    <experiments>8</experiments>
</comment>
<comment type="interaction">
    <interactant intactId="EBI-400125">
        <id>Q01097</id>
    </interactant>
    <interactant intactId="EBI-300895">
        <id>Q62108</id>
        <label>Dlg4</label>
    </interactant>
    <organismsDiffer>false</organismsDiffer>
    <experiments>19</experiments>
</comment>
<comment type="interaction">
    <interactant intactId="EBI-400125">
        <id>Q01097</id>
    </interactant>
    <interactant intactId="EBI-400084">
        <id>P35438</id>
        <label>Grin1</label>
    </interactant>
    <organismsDiffer>false</organismsDiffer>
    <experiments>11</experiments>
</comment>
<comment type="subcellular location">
    <subcellularLocation>
        <location evidence="11 16">Cell membrane</location>
        <topology evidence="4">Multi-pass membrane protein</topology>
    </subcellularLocation>
    <subcellularLocation>
        <location evidence="4">Postsynaptic cell membrane</location>
        <topology evidence="4">Multi-pass membrane protein</topology>
    </subcellularLocation>
    <subcellularLocation>
        <location evidence="5">Cell projection</location>
        <location evidence="5">Dendrite</location>
    </subcellularLocation>
    <subcellularLocation>
        <location evidence="18">Late endosome</location>
    </subcellularLocation>
    <subcellularLocation>
        <location evidence="18">Lysosome</location>
    </subcellularLocation>
    <subcellularLocation>
        <location evidence="8">Cytoplasm</location>
        <location evidence="8">Cytoskeleton</location>
    </subcellularLocation>
    <text evidence="8">Co-localizes with the motor protein KIF17 along microtubules.</text>
</comment>
<comment type="tissue specificity">
    <text evidence="11 21">Detected in brain (at protein level) (PubMed:8789948). Detected throughout the brain, and in brain stem trigeminal nucleus (PubMed:8789948). Detected in forebrain (PubMed:1377365).</text>
</comment>
<comment type="domain">
    <text evidence="4">The extracellular N-terminal domain (ATD/NTD) endows NMDARs with a unique capacity for allosteric modulation, harboring several binding sites for small molecule ligands that act as subunit-specific allosteric modulators of ion channel activity.</text>
</comment>
<comment type="domain">
    <text evidence="4">A hydrophobic region that gives rise to the prediction of a transmembrane span does not cross the membrane, but is part of a discontinuously helical region that dips into the membrane and is probably part of the pore and of the selectivity filter.</text>
</comment>
<comment type="PTM">
    <text evidence="10 15">Phosphorylated on tyrosine residues (PubMed:12451687). Phosphorylation at Ser-1303 by DAPK1 enhances synaptic NMDA receptor channel activity (PubMed:20141836).</text>
</comment>
<comment type="disruption phenotype">
    <text evidence="21">Mutant pups are born at the expected Mendelian rate and appear grossly normal, but lack suckling behavior (PubMed:8789948). As a consequence, all die shortly after birth, except when they are fed manually via a soft tube that delivers milk directly into the stomach (PubMed:8789948). While mutant neonate brain structures are grossly normal, the mutant brain stem trigeminal complex lacks the neural repeating units called barrelettes that correspond to whisker-associated nerve fibers (PubMed:8789948). Primary afferent nerve fibers from whiskers fail to show normal clustering in the region where barrelette structures form in wild-type (PubMed:8789948). In contrast, nasolabial motor neurons appear normal (PubMed:8789948). Contrary to wild-type neonates, brain slices from the mutant neonate hippocampus CA1 region lack NMDA receptor-type ion channel activity (PubMed:8789948). Contrary to wild-type pups, prolonged low frequency stimulation of afferent fibers does not induce long-term depression (LTD) in the hippocampus (PubMed:8789948).</text>
</comment>
<comment type="similarity">
    <text evidence="25">Belongs to the glutamate-gated ion channel (TC 1.A.10.1) family. NR2B/GRIN2B subfamily.</text>
</comment>
<proteinExistence type="evidence at protein level"/>
<name>NMDE2_MOUSE</name>
<accession>Q01097</accession>
<accession>Q9DCB2</accession>
<sequence>MKPSAECCSPKFWLVLAVLAVSGSKARSQKSAPSIGIAVILVGTSDEVAIKDAHEKDDFHHLSVVPRVELVAMNETDPKSIITRICDLMSDRKIQGVVLADDTDQEAIAQILDFISAQTLTPILGIHGGSSMIMADKDESSMFFQFGPSIEQQASVMLNIMEEYDWYIFSIVTTYFPGYQDFVNKIRSTIENSFVGWELEEVLLLDMSLDDGDSKIQNQLKKLQSPIILLYCTKEEATYIFEVANSVGLTGYGYTWIVPSLVAGDTDTVPSEFPTGLISVSYDEWDYGLPARVRDGIAIITTAASDMLSEHSFIPEPKSSCYNTHEKRIYQSNMLNRYLINVTFEGRNLSFSEDGYQMHPKLVIILLNKERKWERVGKWKDKSLQMKYYVWPRMCPETEEQEDDHLSIVTLEEAPFVIVESVDPLSGTCMRNTVPCQKRIISENKTDEEPGYIKKCCKGFCIDILKKISKSVKFTYDLYLVTNGKHGKKINGTWNGMIGEVVMKRAYMAVGSLTINEERSEVVDFSVPFIETGISVMVSRSNGTVSPSAFLEPFSADVWVMMFVMLLIVSAVAVFVFEYFSPVGYNRCLADGREPGGPSFTIGKAIWLLWGLVFNNSVPVQNPKGTTSKIMVSVWAFFAVIFLASYTANLAAFMIQEEYVDQVSGLSDKKFQRPNDFSPPFRFGTVPNGSTERNIRNNYAEMHAYMGKFNQRGVDDALLSLKTGKLDAFIYDAAVLNYMAGRDEGCKLVTIGSGKVFASTGYGIAIQKDSGWKRQVDLAILQLFGDGEMEELEALWLTGICHNEKNEVMSSQLDIDNMAGVFYMLGAAMALSLITFICEHLFYWQFRHCFMGVCSGKPGMVFSISRGIYSCIHGVAIEERQSVMNSPTATMNNTHSNILRLLRTAKNMANLSGVNGSPQSALDFIRRESSVYDISEHRRSFTHSDCKSYNNPPCEENLFSDYISEVERTFGNLQLKDSNVYQDHYHHHHRPHSIGSTSSIDGLYDCDNPPFTTQPRSISKKPLDIGLPSSKHSQLSDLYGKFSFKSDRYSGHDDLIRSDVSDISTHTVTYGNIEGNAAKRRKQQYKDSLKKRPASAKSRREFDEIELAYRRRPPRSPDHKRYFRDKEGLRDFYLDQFRTKENSPHWEHVDLTDIYKERSDDFKRDSVSGGGPCTNRSHLKHGTGDKHGVVGGVPAPWEKNLTNVDWEDRSGGNFCRSCPSKLHNYSSTVAGQNSGRQACIRCEACKKAGNLYDISEDNSLQELDQPAAPVAVSSNASTTKYPQSPTNSKAQKKNRNKLRRQHSYDTFVDLQKEEAALAPRSVSLKDKGRFMDGSPYAHMFEMPAGESSFANKSSVTTAGHHHNNPGSGYMLSKSLYPDRVTQNPFIPTFGDDQCLLHGSKSYFFRQPTVAGASKTRPDFRALVTNKPVVSALHGAVPGRFQKDICIGNQSNPCVPNNKNPRAFNGSSNGHVYEKLSSIESDV</sequence>
<evidence type="ECO:0000250" key="1"/>
<evidence type="ECO:0000250" key="2">
    <source>
        <dbReference type="UniProtKB" id="A7XY94"/>
    </source>
</evidence>
<evidence type="ECO:0000250" key="3">
    <source>
        <dbReference type="UniProtKB" id="P35438"/>
    </source>
</evidence>
<evidence type="ECO:0000250" key="4">
    <source>
        <dbReference type="UniProtKB" id="Q00960"/>
    </source>
</evidence>
<evidence type="ECO:0000250" key="5">
    <source>
        <dbReference type="UniProtKB" id="Q13224"/>
    </source>
</evidence>
<evidence type="ECO:0000255" key="6"/>
<evidence type="ECO:0000256" key="7">
    <source>
        <dbReference type="SAM" id="MobiDB-lite"/>
    </source>
</evidence>
<evidence type="ECO:0000269" key="8">
    <source>
    </source>
</evidence>
<evidence type="ECO:0000269" key="9">
    <source>
    </source>
</evidence>
<evidence type="ECO:0000269" key="10">
    <source>
    </source>
</evidence>
<evidence type="ECO:0000269" key="11">
    <source>
    </source>
</evidence>
<evidence type="ECO:0000269" key="12">
    <source>
    </source>
</evidence>
<evidence type="ECO:0000269" key="13">
    <source>
    </source>
</evidence>
<evidence type="ECO:0000269" key="14">
    <source>
    </source>
</evidence>
<evidence type="ECO:0000269" key="15">
    <source>
    </source>
</evidence>
<evidence type="ECO:0000269" key="16">
    <source>
    </source>
</evidence>
<evidence type="ECO:0000269" key="17">
    <source>
    </source>
</evidence>
<evidence type="ECO:0000269" key="18">
    <source>
    </source>
</evidence>
<evidence type="ECO:0000269" key="19">
    <source>
    </source>
</evidence>
<evidence type="ECO:0000269" key="20">
    <source>
    </source>
</evidence>
<evidence type="ECO:0000269" key="21">
    <source>
    </source>
</evidence>
<evidence type="ECO:0000303" key="22">
    <source>
    </source>
</evidence>
<evidence type="ECO:0000303" key="23">
    <source>
    </source>
</evidence>
<evidence type="ECO:0000303" key="24">
    <source>
    </source>
</evidence>
<evidence type="ECO:0000305" key="25"/>
<evidence type="ECO:0000305" key="26">
    <source>
    </source>
</evidence>
<evidence type="ECO:0000312" key="27">
    <source>
        <dbReference type="MGI" id="MGI:95821"/>
    </source>
</evidence>
<evidence type="ECO:0007744" key="28">
    <source>
    </source>
</evidence>
<evidence type="ECO:0007744" key="29">
    <source>
    </source>
</evidence>
<gene>
    <name evidence="27" type="primary">Grin2b</name>
</gene>
<reference key="1">
    <citation type="journal article" date="1992" name="Nature">
        <title>Molecular diversity of the NMDA receptor channel.</title>
        <authorList>
            <person name="Kutsuwada T."/>
            <person name="Kashiwabuchi N."/>
            <person name="Mori H."/>
            <person name="Sakimura K."/>
            <person name="Kushiya E."/>
            <person name="Araki K."/>
            <person name="Meguro H."/>
            <person name="Masaki H."/>
            <person name="Kumanishi T."/>
            <person name="Arakawa M."/>
            <person name="Mishina M."/>
        </authorList>
    </citation>
    <scope>NUCLEOTIDE SEQUENCE [MRNA]</scope>
    <scope>FUNCTION</scope>
    <scope>TRANSPORTER ACTIVITY</scope>
    <scope>SUBCELLULAR LOCATION</scope>
    <scope>SUBUNIT</scope>
    <scope>TISSUE SPECIFICITY</scope>
</reference>
<reference key="2">
    <citation type="submission" date="2004-02" db="EMBL/GenBank/DDBJ databases">
        <authorList>
            <person name="Kutsuwada T."/>
            <person name="Kashiwabuchi N."/>
            <person name="Mori H."/>
            <person name="Sakimura K."/>
            <person name="Kushiya E."/>
            <person name="Araki K."/>
            <person name="Meguro H."/>
            <person name="Masaki H."/>
            <person name="Kumanishi T."/>
            <person name="Arakawa M."/>
            <person name="Mishina M."/>
        </authorList>
    </citation>
    <scope>SEQUENCE REVISION</scope>
</reference>
<reference key="3">
    <citation type="journal article" date="2005" name="Science">
        <title>The transcriptional landscape of the mammalian genome.</title>
        <authorList>
            <person name="Carninci P."/>
            <person name="Kasukawa T."/>
            <person name="Katayama S."/>
            <person name="Gough J."/>
            <person name="Frith M.C."/>
            <person name="Maeda N."/>
            <person name="Oyama R."/>
            <person name="Ravasi T."/>
            <person name="Lenhard B."/>
            <person name="Wells C."/>
            <person name="Kodzius R."/>
            <person name="Shimokawa K."/>
            <person name="Bajic V.B."/>
            <person name="Brenner S.E."/>
            <person name="Batalov S."/>
            <person name="Forrest A.R."/>
            <person name="Zavolan M."/>
            <person name="Davis M.J."/>
            <person name="Wilming L.G."/>
            <person name="Aidinis V."/>
            <person name="Allen J.E."/>
            <person name="Ambesi-Impiombato A."/>
            <person name="Apweiler R."/>
            <person name="Aturaliya R.N."/>
            <person name="Bailey T.L."/>
            <person name="Bansal M."/>
            <person name="Baxter L."/>
            <person name="Beisel K.W."/>
            <person name="Bersano T."/>
            <person name="Bono H."/>
            <person name="Chalk A.M."/>
            <person name="Chiu K.P."/>
            <person name="Choudhary V."/>
            <person name="Christoffels A."/>
            <person name="Clutterbuck D.R."/>
            <person name="Crowe M.L."/>
            <person name="Dalla E."/>
            <person name="Dalrymple B.P."/>
            <person name="de Bono B."/>
            <person name="Della Gatta G."/>
            <person name="di Bernardo D."/>
            <person name="Down T."/>
            <person name="Engstrom P."/>
            <person name="Fagiolini M."/>
            <person name="Faulkner G."/>
            <person name="Fletcher C.F."/>
            <person name="Fukushima T."/>
            <person name="Furuno M."/>
            <person name="Futaki S."/>
            <person name="Gariboldi M."/>
            <person name="Georgii-Hemming P."/>
            <person name="Gingeras T.R."/>
            <person name="Gojobori T."/>
            <person name="Green R.E."/>
            <person name="Gustincich S."/>
            <person name="Harbers M."/>
            <person name="Hayashi Y."/>
            <person name="Hensch T.K."/>
            <person name="Hirokawa N."/>
            <person name="Hill D."/>
            <person name="Huminiecki L."/>
            <person name="Iacono M."/>
            <person name="Ikeo K."/>
            <person name="Iwama A."/>
            <person name="Ishikawa T."/>
            <person name="Jakt M."/>
            <person name="Kanapin A."/>
            <person name="Katoh M."/>
            <person name="Kawasawa Y."/>
            <person name="Kelso J."/>
            <person name="Kitamura H."/>
            <person name="Kitano H."/>
            <person name="Kollias G."/>
            <person name="Krishnan S.P."/>
            <person name="Kruger A."/>
            <person name="Kummerfeld S.K."/>
            <person name="Kurochkin I.V."/>
            <person name="Lareau L.F."/>
            <person name="Lazarevic D."/>
            <person name="Lipovich L."/>
            <person name="Liu J."/>
            <person name="Liuni S."/>
            <person name="McWilliam S."/>
            <person name="Madan Babu M."/>
            <person name="Madera M."/>
            <person name="Marchionni L."/>
            <person name="Matsuda H."/>
            <person name="Matsuzawa S."/>
            <person name="Miki H."/>
            <person name="Mignone F."/>
            <person name="Miyake S."/>
            <person name="Morris K."/>
            <person name="Mottagui-Tabar S."/>
            <person name="Mulder N."/>
            <person name="Nakano N."/>
            <person name="Nakauchi H."/>
            <person name="Ng P."/>
            <person name="Nilsson R."/>
            <person name="Nishiguchi S."/>
            <person name="Nishikawa S."/>
            <person name="Nori F."/>
            <person name="Ohara O."/>
            <person name="Okazaki Y."/>
            <person name="Orlando V."/>
            <person name="Pang K.C."/>
            <person name="Pavan W.J."/>
            <person name="Pavesi G."/>
            <person name="Pesole G."/>
            <person name="Petrovsky N."/>
            <person name="Piazza S."/>
            <person name="Reed J."/>
            <person name="Reid J.F."/>
            <person name="Ring B.Z."/>
            <person name="Ringwald M."/>
            <person name="Rost B."/>
            <person name="Ruan Y."/>
            <person name="Salzberg S.L."/>
            <person name="Sandelin A."/>
            <person name="Schneider C."/>
            <person name="Schoenbach C."/>
            <person name="Sekiguchi K."/>
            <person name="Semple C.A."/>
            <person name="Seno S."/>
            <person name="Sessa L."/>
            <person name="Sheng Y."/>
            <person name="Shibata Y."/>
            <person name="Shimada H."/>
            <person name="Shimada K."/>
            <person name="Silva D."/>
            <person name="Sinclair B."/>
            <person name="Sperling S."/>
            <person name="Stupka E."/>
            <person name="Sugiura K."/>
            <person name="Sultana R."/>
            <person name="Takenaka Y."/>
            <person name="Taki K."/>
            <person name="Tammoja K."/>
            <person name="Tan S.L."/>
            <person name="Tang S."/>
            <person name="Taylor M.S."/>
            <person name="Tegner J."/>
            <person name="Teichmann S.A."/>
            <person name="Ueda H.R."/>
            <person name="van Nimwegen E."/>
            <person name="Verardo R."/>
            <person name="Wei C.L."/>
            <person name="Yagi K."/>
            <person name="Yamanishi H."/>
            <person name="Zabarovsky E."/>
            <person name="Zhu S."/>
            <person name="Zimmer A."/>
            <person name="Hide W."/>
            <person name="Bult C."/>
            <person name="Grimmond S.M."/>
            <person name="Teasdale R.D."/>
            <person name="Liu E.T."/>
            <person name="Brusic V."/>
            <person name="Quackenbush J."/>
            <person name="Wahlestedt C."/>
            <person name="Mattick J.S."/>
            <person name="Hume D.A."/>
            <person name="Kai C."/>
            <person name="Sasaki D."/>
            <person name="Tomaru Y."/>
            <person name="Fukuda S."/>
            <person name="Kanamori-Katayama M."/>
            <person name="Suzuki M."/>
            <person name="Aoki J."/>
            <person name="Arakawa T."/>
            <person name="Iida J."/>
            <person name="Imamura K."/>
            <person name="Itoh M."/>
            <person name="Kato T."/>
            <person name="Kawaji H."/>
            <person name="Kawagashira N."/>
            <person name="Kawashima T."/>
            <person name="Kojima M."/>
            <person name="Kondo S."/>
            <person name="Konno H."/>
            <person name="Nakano K."/>
            <person name="Ninomiya N."/>
            <person name="Nishio T."/>
            <person name="Okada M."/>
            <person name="Plessy C."/>
            <person name="Shibata K."/>
            <person name="Shiraki T."/>
            <person name="Suzuki S."/>
            <person name="Tagami M."/>
            <person name="Waki K."/>
            <person name="Watahiki A."/>
            <person name="Okamura-Oho Y."/>
            <person name="Suzuki H."/>
            <person name="Kawai J."/>
            <person name="Hayashizaki Y."/>
        </authorList>
    </citation>
    <scope>NUCLEOTIDE SEQUENCE [LARGE SCALE MRNA] OF 1-337</scope>
    <source>
        <strain>C57BL/6J</strain>
        <tissue>Brain</tissue>
    </source>
</reference>
<reference key="4">
    <citation type="journal article" date="1995" name="J. Neurochem.">
        <title>Functional comparison of D-serine and glycine in rodents: the effect on cloned NMDA receptors and the extracellular concentration.</title>
        <authorList>
            <person name="Matsui T."/>
            <person name="Sekiguchi M."/>
            <person name="Hashimoto A."/>
            <person name="Tomita U."/>
            <person name="Nishikawa T."/>
            <person name="Wada K."/>
        </authorList>
    </citation>
    <scope>FUNCTION</scope>
</reference>
<reference key="5">
    <citation type="journal article" date="1996" name="Neuron">
        <title>Impairment of suckling response, trigeminal neuronal pattern formation, and hippocampal LTD in NMDA receptor epsilon 2 subunit mutant mice.</title>
        <authorList>
            <person name="Kutsuwada T."/>
            <person name="Sakimura K."/>
            <person name="Manabe T."/>
            <person name="Takayama C."/>
            <person name="Katakura N."/>
            <person name="Kushiya E."/>
            <person name="Natsume R."/>
            <person name="Watanabe M."/>
            <person name="Inoue Y."/>
            <person name="Yagi T."/>
            <person name="Aizawa S."/>
            <person name="Arakawa M."/>
            <person name="Takahashi T."/>
            <person name="Nakamura Y."/>
            <person name="Mori H."/>
            <person name="Mishina M."/>
        </authorList>
    </citation>
    <scope>FUNCTION</scope>
    <scope>DISRUPTION PHENOTYPE</scope>
    <scope>TISSUE SPECIFICITY</scope>
</reference>
<reference key="6">
    <citation type="journal article" date="2000" name="Science">
        <title>Kinesin superfamily motor protein KIF17 and mLin-10 in NMDA receptor-containing vesicle transport.</title>
        <authorList>
            <person name="Setou M."/>
            <person name="Nakagawa T."/>
            <person name="Seog D.-H."/>
            <person name="Hirokawa N."/>
        </authorList>
    </citation>
    <scope>SUBCELLULAR LOCATION</scope>
</reference>
<reference key="7">
    <citation type="journal article" date="2002" name="Brain Res. Mol. Brain Res.">
        <title>Cloning and characterization of a novel NMDA receptor subunit NR3B: a dominant subunit that reduces calcium permeability.</title>
        <authorList>
            <person name="Matsuda K."/>
            <person name="Kamiya Y."/>
            <person name="Matsuda S."/>
            <person name="Yuzaki M."/>
        </authorList>
    </citation>
    <scope>IDENTIFICATION IN A COMPLEX WITH GRIN1 AND GRIN3B</scope>
</reference>
<reference key="8">
    <citation type="journal article" date="2002" name="Nihon Shinkei Seishin Yakurigaku Zasshi">
        <title>Regulation of NMDA receptor function by Fyn-mediated tyrosine phosphorylation.</title>
        <authorList>
            <person name="Nakazawa T."/>
            <person name="Tezuka T."/>
            <person name="Yamamoto T."/>
        </authorList>
    </citation>
    <scope>PHOSPHORYLATION AT TYR-1472</scope>
</reference>
<reference key="9">
    <citation type="journal article" date="2003" name="J. Neurosci.">
        <title>Specific assembly with the NMDA receptor 3B subunit controls surface expression and calcium permeability of NMDA receptors.</title>
        <authorList>
            <person name="Matsuda K."/>
            <person name="Fletcher M."/>
            <person name="Kamiya Y."/>
            <person name="Yuzaki M."/>
        </authorList>
    </citation>
    <scope>IDENTIFICATION IN A COMPLEX WITH GRIN1 AND GRIN3B</scope>
</reference>
<reference key="10">
    <citation type="journal article" date="2006" name="Mol. Cell. Proteomics">
        <title>Comprehensive identification of phosphorylation sites in postsynaptic density preparations.</title>
        <authorList>
            <person name="Trinidad J.C."/>
            <person name="Specht C.G."/>
            <person name="Thalhammer A."/>
            <person name="Schoepfer R."/>
            <person name="Burlingame A.L."/>
        </authorList>
    </citation>
    <scope>IDENTIFICATION BY MASS SPECTROMETRY [LARGE SCALE ANALYSIS]</scope>
    <source>
        <tissue>Brain</tissue>
    </source>
</reference>
<reference key="11">
    <citation type="journal article" date="2007" name="J. Neurosci.">
        <title>NMDA receptor function and NMDA receptor-dependent phosphorylation of huntingtin is altered by the endocytic protein HIP1.</title>
        <authorList>
            <person name="Metzler M."/>
            <person name="Gan L."/>
            <person name="Wong T.P."/>
            <person name="Liu L."/>
            <person name="Helm J."/>
            <person name="Liu L."/>
            <person name="Georgiou J."/>
            <person name="Wang Y."/>
            <person name="Bissada N."/>
            <person name="Cheng K."/>
            <person name="Roder J.C."/>
            <person name="Wang Y.T."/>
            <person name="Hayden M.R."/>
        </authorList>
    </citation>
    <scope>INTERACTION WITH HIP1</scope>
</reference>
<reference key="12">
    <citation type="journal article" date="2007" name="Mol. Cell. Proteomics">
        <title>Qualitative and quantitative analyses of protein phosphorylation in naive and stimulated mouse synaptosomal preparations.</title>
        <authorList>
            <person name="Munton R.P."/>
            <person name="Tweedie-Cullen R."/>
            <person name="Livingstone-Zatchej M."/>
            <person name="Weinandy F."/>
            <person name="Waidelich M."/>
            <person name="Longo D."/>
            <person name="Gehrig P."/>
            <person name="Potthast F."/>
            <person name="Rutishauser D."/>
            <person name="Gerrits B."/>
            <person name="Panse C."/>
            <person name="Schlapbach R."/>
            <person name="Mansuy I.M."/>
        </authorList>
    </citation>
    <scope>IDENTIFICATION BY MASS SPECTROMETRY [LARGE SCALE ANALYSIS]</scope>
    <source>
        <tissue>Brain cortex</tissue>
    </source>
</reference>
<reference key="13">
    <citation type="journal article" date="2008" name="J. Proteome Res.">
        <title>Large-scale identification and evolution indexing of tyrosine phosphorylation sites from murine brain.</title>
        <authorList>
            <person name="Ballif B.A."/>
            <person name="Carey G.R."/>
            <person name="Sunyaev S.R."/>
            <person name="Gygi S.P."/>
        </authorList>
    </citation>
    <scope>PHOSPHORYLATION [LARGE SCALE ANALYSIS] AT TYR-962; TYR-1039; TYR-1109; TYR-1133 AND TYR-1155</scope>
    <scope>IDENTIFICATION BY MASS SPECTROMETRY [LARGE SCALE ANALYSIS]</scope>
    <source>
        <tissue>Brain</tissue>
    </source>
</reference>
<reference key="14">
    <citation type="journal article" date="2009" name="PLoS Biol.">
        <title>Neto1 is a novel CUB-domain NMDA receptor-interacting protein required for synaptic plasticity and learning.</title>
        <authorList>
            <person name="Ng D."/>
            <person name="Pitcher G.M."/>
            <person name="Szilard R.K."/>
            <person name="Sertie A."/>
            <person name="Kanisek M."/>
            <person name="Clapcote S.J."/>
            <person name="Lipina T."/>
            <person name="Kalia L.V."/>
            <person name="Joo D."/>
            <person name="McKerlie C."/>
            <person name="Cortez M."/>
            <person name="Roder J.C."/>
            <person name="Salter M.W."/>
            <person name="McInnes R.R."/>
        </authorList>
    </citation>
    <scope>INTERACTION WITH NETO1</scope>
</reference>
<reference key="15">
    <citation type="journal article" date="2010" name="Cell">
        <title>DAPK1 interaction with NMDA receptor NR2B subunits mediates brain damage in stroke.</title>
        <authorList>
            <person name="Tu W."/>
            <person name="Xu X."/>
            <person name="Peng L."/>
            <person name="Zhong X."/>
            <person name="Zhang W."/>
            <person name="Soundarapandian M.M."/>
            <person name="Balel C."/>
            <person name="Wang M."/>
            <person name="Jia N."/>
            <person name="Zhang W."/>
            <person name="Lew F."/>
            <person name="Chan S.L."/>
            <person name="Chen Y."/>
            <person name="Lu Y."/>
        </authorList>
    </citation>
    <scope>FUNCTION</scope>
    <scope>TRANSPORTER ACTIVITY</scope>
    <scope>PHOSPHORYLATION AT SER-1303</scope>
    <scope>INTERACTION WITH DAPK1</scope>
</reference>
<reference key="16">
    <citation type="journal article" date="2010" name="Cell">
        <title>A tissue-specific atlas of mouse protein phosphorylation and expression.</title>
        <authorList>
            <person name="Huttlin E.L."/>
            <person name="Jedrychowski M.P."/>
            <person name="Elias J.E."/>
            <person name="Goswami T."/>
            <person name="Rad R."/>
            <person name="Beausoleil S.A."/>
            <person name="Villen J."/>
            <person name="Haas W."/>
            <person name="Sowa M.E."/>
            <person name="Gygi S.P."/>
        </authorList>
    </citation>
    <scope>PHOSPHORYLATION [LARGE SCALE ANALYSIS] AT SER-882; SER-917; SER-920; SER-1058; SER-1061; SER-1064; SER-1143; SER-1255; SER-1259 AND SER-1303</scope>
    <scope>IDENTIFICATION BY MASS SPECTROMETRY [LARGE SCALE ANALYSIS]</scope>
    <source>
        <tissue>Brain</tissue>
    </source>
</reference>
<reference key="17">
    <citation type="journal article" date="2016" name="Mol. Pharmacol.">
        <title>A Novel Binding Mode Reveals Two Distinct Classes of NMDA Receptor GluN2B-selective Antagonists.</title>
        <authorList>
            <person name="Stroebel D."/>
            <person name="Buhl D.L."/>
            <person name="Knafels J.D."/>
            <person name="Chanda P.K."/>
            <person name="Green M."/>
            <person name="Sciabola S."/>
            <person name="Mony L."/>
            <person name="Paoletti P."/>
            <person name="Pandit J."/>
        </authorList>
    </citation>
    <scope>FUNCTION</scope>
    <scope>TRANSPORTER ACTIVITY</scope>
    <scope>SUBCELLULAR LOCATION</scope>
    <scope>SUBUNIT</scope>
</reference>
<reference key="18">
    <citation type="journal article" date="2019" name="J. Clin. Invest.">
        <title>TMEM25 modulates neuronal excitability and NMDA receptor subunit NR2B degradation.</title>
        <authorList>
            <person name="Zhang H."/>
            <person name="Tian X."/>
            <person name="Lu X."/>
            <person name="Xu D."/>
            <person name="Guo Y."/>
            <person name="Dong Z."/>
            <person name="Li Y."/>
            <person name="Ma Y."/>
            <person name="Chen C."/>
            <person name="Yang Y."/>
            <person name="Yang M."/>
            <person name="Yang Y."/>
            <person name="Liu F."/>
            <person name="Zhou R."/>
            <person name="He M."/>
            <person name="Xiao F."/>
            <person name="Wang X."/>
        </authorList>
    </citation>
    <scope>SUBCELLULAR LOCATION</scope>
    <scope>INTERACTION WITH TMEM25</scope>
</reference>
<reference key="19">
    <citation type="journal article" date="2019" name="Biochem. Biophys. Res. Commun.">
        <title>The second PDZ domain of scaffold protein Frmpd2 binds to GluN2A of NMDA receptors.</title>
        <authorList>
            <person name="Lu X."/>
            <person name="Zhang Q."/>
            <person name="Wang T."/>
        </authorList>
    </citation>
    <scope>INTERACTION WITH FRMPD2</scope>
</reference>
<reference key="20">
    <citation type="journal article" date="2024" name="PLoS Biol.">
        <title>FAM81A is a postsynaptic protein that regulates the condensation of postsynaptic proteins via liquid-liquid phase separation.</title>
        <authorList>
            <person name="Kaizuka T."/>
            <person name="Hirouchi T."/>
            <person name="Saneyoshi T."/>
            <person name="Shirafuji T."/>
            <person name="Collins M.O."/>
            <person name="Grant S.G.N."/>
            <person name="Hayashi Y."/>
            <person name="Takumi T."/>
        </authorList>
    </citation>
    <scope>INTERACTION WITH FAM81A</scope>
</reference>
<organism>
    <name type="scientific">Mus musculus</name>
    <name type="common">Mouse</name>
    <dbReference type="NCBI Taxonomy" id="10090"/>
    <lineage>
        <taxon>Eukaryota</taxon>
        <taxon>Metazoa</taxon>
        <taxon>Chordata</taxon>
        <taxon>Craniata</taxon>
        <taxon>Vertebrata</taxon>
        <taxon>Euteleostomi</taxon>
        <taxon>Mammalia</taxon>
        <taxon>Eutheria</taxon>
        <taxon>Euarchontoglires</taxon>
        <taxon>Glires</taxon>
        <taxon>Rodentia</taxon>
        <taxon>Myomorpha</taxon>
        <taxon>Muroidea</taxon>
        <taxon>Muridae</taxon>
        <taxon>Murinae</taxon>
        <taxon>Mus</taxon>
        <taxon>Mus</taxon>
    </lineage>
</organism>
<protein>
    <recommendedName>
        <fullName evidence="25">Glutamate receptor ionotropic, NMDA 2B</fullName>
        <shortName evidence="23">GluN2B</shortName>
    </recommendedName>
    <alternativeName>
        <fullName evidence="22">Glutamate [NMDA] receptor subunit epsilon-2</fullName>
    </alternativeName>
    <alternativeName>
        <fullName>N-methyl D-aspartate receptor subtype 2B</fullName>
        <shortName>NMDAR2B</shortName>
        <shortName evidence="24">NR2B</shortName>
    </alternativeName>
</protein>
<keyword id="KW-0106">Calcium</keyword>
<keyword id="KW-1003">Cell membrane</keyword>
<keyword id="KW-0966">Cell projection</keyword>
<keyword id="KW-0963">Cytoplasm</keyword>
<keyword id="KW-0206">Cytoskeleton</keyword>
<keyword id="KW-1015">Disulfide bond</keyword>
<keyword id="KW-0967">Endosome</keyword>
<keyword id="KW-0325">Glycoprotein</keyword>
<keyword id="KW-0407">Ion channel</keyword>
<keyword id="KW-0406">Ion transport</keyword>
<keyword id="KW-1071">Ligand-gated ion channel</keyword>
<keyword id="KW-0458">Lysosome</keyword>
<keyword id="KW-0460">Magnesium</keyword>
<keyword id="KW-0472">Membrane</keyword>
<keyword id="KW-0479">Metal-binding</keyword>
<keyword id="KW-0597">Phosphoprotein</keyword>
<keyword id="KW-0628">Postsynaptic cell membrane</keyword>
<keyword id="KW-0675">Receptor</keyword>
<keyword id="KW-1185">Reference proteome</keyword>
<keyword id="KW-0732">Signal</keyword>
<keyword id="KW-0770">Synapse</keyword>
<keyword id="KW-0812">Transmembrane</keyword>
<keyword id="KW-1133">Transmembrane helix</keyword>
<keyword id="KW-0813">Transport</keyword>
<keyword id="KW-0862">Zinc</keyword>
<dbReference type="EMBL" id="D10651">
    <property type="protein sequence ID" value="BAA01498.2"/>
    <property type="molecule type" value="mRNA"/>
</dbReference>
<dbReference type="EMBL" id="AK002963">
    <property type="protein sequence ID" value="BAB22483.1"/>
    <property type="molecule type" value="mRNA"/>
</dbReference>
<dbReference type="CCDS" id="CCDS20648.1"/>
<dbReference type="PIR" id="I49704">
    <property type="entry name" value="I49704"/>
</dbReference>
<dbReference type="RefSeq" id="NP_032197.3">
    <property type="nucleotide sequence ID" value="NM_008171.3"/>
</dbReference>
<dbReference type="SMR" id="Q01097"/>
<dbReference type="BioGRID" id="200069">
    <property type="interactions" value="134"/>
</dbReference>
<dbReference type="ComplexPortal" id="CPX-291">
    <property type="entry name" value="NMDA receptor complex, GluN1-GluN2B"/>
</dbReference>
<dbReference type="ComplexPortal" id="CPX-296">
    <property type="entry name" value="NMDA receptor complex, GluN1-GluN2A-GluN2B"/>
</dbReference>
<dbReference type="CORUM" id="Q01097"/>
<dbReference type="DIP" id="DIP-31568N"/>
<dbReference type="FunCoup" id="Q01097">
    <property type="interactions" value="1044"/>
</dbReference>
<dbReference type="IntAct" id="Q01097">
    <property type="interactions" value="43"/>
</dbReference>
<dbReference type="MINT" id="Q01097"/>
<dbReference type="STRING" id="10090.ENSMUSP00000062284"/>
<dbReference type="BindingDB" id="Q01097"/>
<dbReference type="ChEMBL" id="CHEMBL3442"/>
<dbReference type="GlyConnect" id="2351">
    <property type="glycosylation" value="11 N-Linked glycans (6 sites)"/>
</dbReference>
<dbReference type="GlyCosmos" id="Q01097">
    <property type="glycosylation" value="7 sites, 11 glycans"/>
</dbReference>
<dbReference type="GlyGen" id="Q01097">
    <property type="glycosylation" value="18 sites, 17 N-linked glycans (15 sites), 1 O-linked glycan (2 sites)"/>
</dbReference>
<dbReference type="iPTMnet" id="Q01097"/>
<dbReference type="PhosphoSitePlus" id="Q01097"/>
<dbReference type="SwissPalm" id="Q01097"/>
<dbReference type="CPTAC" id="non-CPTAC-4053"/>
<dbReference type="jPOST" id="Q01097"/>
<dbReference type="PaxDb" id="10090-ENSMUSP00000062284"/>
<dbReference type="ProteomicsDB" id="293864"/>
<dbReference type="ABCD" id="Q01097">
    <property type="antibodies" value="3 sequenced antibodies"/>
</dbReference>
<dbReference type="DNASU" id="14812"/>
<dbReference type="GeneID" id="14812"/>
<dbReference type="KEGG" id="mmu:14812"/>
<dbReference type="AGR" id="MGI:95821"/>
<dbReference type="CTD" id="2904"/>
<dbReference type="MGI" id="MGI:95821">
    <property type="gene designation" value="Grin2b"/>
</dbReference>
<dbReference type="eggNOG" id="KOG1053">
    <property type="taxonomic scope" value="Eukaryota"/>
</dbReference>
<dbReference type="InParanoid" id="Q01097"/>
<dbReference type="OrthoDB" id="5984008at2759"/>
<dbReference type="PhylomeDB" id="Q01097"/>
<dbReference type="Reactome" id="R-MMU-3928662">
    <property type="pathway name" value="EPHB-mediated forward signaling"/>
</dbReference>
<dbReference type="Reactome" id="R-MMU-438066">
    <property type="pathway name" value="Unblocking of NMDA receptors, glutamate binding and activation"/>
</dbReference>
<dbReference type="Reactome" id="R-MMU-5673001">
    <property type="pathway name" value="RAF/MAP kinase cascade"/>
</dbReference>
<dbReference type="Reactome" id="R-MMU-8849932">
    <property type="pathway name" value="Synaptic adhesion-like molecules"/>
</dbReference>
<dbReference type="Reactome" id="R-MMU-9609736">
    <property type="pathway name" value="Assembly and cell surface presentation of NMDA receptors"/>
</dbReference>
<dbReference type="BioGRID-ORCS" id="14812">
    <property type="hits" value="0 hits in 77 CRISPR screens"/>
</dbReference>
<dbReference type="CD-CODE" id="CE726F99">
    <property type="entry name" value="Postsynaptic density"/>
</dbReference>
<dbReference type="ChiTaRS" id="Grin2b">
    <property type="organism name" value="mouse"/>
</dbReference>
<dbReference type="PRO" id="PR:Q01097"/>
<dbReference type="Proteomes" id="UP000000589">
    <property type="component" value="Unplaced"/>
</dbReference>
<dbReference type="RNAct" id="Q01097">
    <property type="molecule type" value="protein"/>
</dbReference>
<dbReference type="GO" id="GO:0009986">
    <property type="term" value="C:cell surface"/>
    <property type="evidence" value="ECO:0000314"/>
    <property type="project" value="BHF-UCL"/>
</dbReference>
<dbReference type="GO" id="GO:0005856">
    <property type="term" value="C:cytoskeleton"/>
    <property type="evidence" value="ECO:0007669"/>
    <property type="project" value="UniProtKB-SubCell"/>
</dbReference>
<dbReference type="GO" id="GO:0030425">
    <property type="term" value="C:dendrite"/>
    <property type="evidence" value="ECO:0007669"/>
    <property type="project" value="UniProtKB-SubCell"/>
</dbReference>
<dbReference type="GO" id="GO:0005789">
    <property type="term" value="C:endoplasmic reticulum membrane"/>
    <property type="evidence" value="ECO:0000304"/>
    <property type="project" value="Reactome"/>
</dbReference>
<dbReference type="GO" id="GO:0098978">
    <property type="term" value="C:glutamatergic synapse"/>
    <property type="evidence" value="ECO:0000314"/>
    <property type="project" value="SynGO"/>
</dbReference>
<dbReference type="GO" id="GO:0005770">
    <property type="term" value="C:late endosome"/>
    <property type="evidence" value="ECO:0000314"/>
    <property type="project" value="UniProtKB"/>
</dbReference>
<dbReference type="GO" id="GO:0005764">
    <property type="term" value="C:lysosome"/>
    <property type="evidence" value="ECO:0000314"/>
    <property type="project" value="UniProtKB"/>
</dbReference>
<dbReference type="GO" id="GO:0016020">
    <property type="term" value="C:membrane"/>
    <property type="evidence" value="ECO:0000314"/>
    <property type="project" value="MGI"/>
</dbReference>
<dbReference type="GO" id="GO:0043005">
    <property type="term" value="C:neuron projection"/>
    <property type="evidence" value="ECO:0000314"/>
    <property type="project" value="BHF-UCL"/>
</dbReference>
<dbReference type="GO" id="GO:0017146">
    <property type="term" value="C:NMDA selective glutamate receptor complex"/>
    <property type="evidence" value="ECO:0000353"/>
    <property type="project" value="MGI"/>
</dbReference>
<dbReference type="GO" id="GO:0005886">
    <property type="term" value="C:plasma membrane"/>
    <property type="evidence" value="ECO:0000266"/>
    <property type="project" value="ComplexPortal"/>
</dbReference>
<dbReference type="GO" id="GO:0098794">
    <property type="term" value="C:postsynapse"/>
    <property type="evidence" value="ECO:0000314"/>
    <property type="project" value="ParkinsonsUK-UCL"/>
</dbReference>
<dbReference type="GO" id="GO:0014069">
    <property type="term" value="C:postsynaptic density"/>
    <property type="evidence" value="ECO:0000314"/>
    <property type="project" value="BHF-UCL"/>
</dbReference>
<dbReference type="GO" id="GO:0098839">
    <property type="term" value="C:postsynaptic density membrane"/>
    <property type="evidence" value="ECO:0000314"/>
    <property type="project" value="SynGO"/>
</dbReference>
<dbReference type="GO" id="GO:0045211">
    <property type="term" value="C:postsynaptic membrane"/>
    <property type="evidence" value="ECO:0000314"/>
    <property type="project" value="MGI"/>
</dbReference>
<dbReference type="GO" id="GO:0042734">
    <property type="term" value="C:presynaptic membrane"/>
    <property type="evidence" value="ECO:0000314"/>
    <property type="project" value="UniProtKB"/>
</dbReference>
<dbReference type="GO" id="GO:0045202">
    <property type="term" value="C:synapse"/>
    <property type="evidence" value="ECO:0000314"/>
    <property type="project" value="MGI"/>
</dbReference>
<dbReference type="GO" id="GO:0097060">
    <property type="term" value="C:synaptic membrane"/>
    <property type="evidence" value="ECO:0000314"/>
    <property type="project" value="ARUK-UCL"/>
</dbReference>
<dbReference type="GO" id="GO:0008021">
    <property type="term" value="C:synaptic vesicle"/>
    <property type="evidence" value="ECO:0000314"/>
    <property type="project" value="MGI"/>
</dbReference>
<dbReference type="GO" id="GO:0030658">
    <property type="term" value="C:transport vesicle membrane"/>
    <property type="evidence" value="ECO:0000304"/>
    <property type="project" value="Reactome"/>
</dbReference>
<dbReference type="GO" id="GO:0005262">
    <property type="term" value="F:calcium channel activity"/>
    <property type="evidence" value="ECO:0000315"/>
    <property type="project" value="MGI"/>
</dbReference>
<dbReference type="GO" id="GO:0016595">
    <property type="term" value="F:glutamate binding"/>
    <property type="evidence" value="ECO:0000250"/>
    <property type="project" value="UniProtKB"/>
</dbReference>
<dbReference type="GO" id="GO:0022849">
    <property type="term" value="F:glutamate-gated calcium ion channel activity"/>
    <property type="evidence" value="ECO:0000250"/>
    <property type="project" value="UniProtKB"/>
</dbReference>
<dbReference type="GO" id="GO:0005261">
    <property type="term" value="F:monoatomic cation channel activity"/>
    <property type="evidence" value="ECO:0000316"/>
    <property type="project" value="MGI"/>
</dbReference>
<dbReference type="GO" id="GO:0004972">
    <property type="term" value="F:NMDA glutamate receptor activity"/>
    <property type="evidence" value="ECO:0000315"/>
    <property type="project" value="MGI"/>
</dbReference>
<dbReference type="GO" id="GO:0008270">
    <property type="term" value="F:zinc ion binding"/>
    <property type="evidence" value="ECO:0000250"/>
    <property type="project" value="UniProtKB"/>
</dbReference>
<dbReference type="GO" id="GO:0001662">
    <property type="term" value="P:behavioral fear response"/>
    <property type="evidence" value="ECO:0000315"/>
    <property type="project" value="MGI"/>
</dbReference>
<dbReference type="GO" id="GO:0048266">
    <property type="term" value="P:behavioral response to pain"/>
    <property type="evidence" value="ECO:0000315"/>
    <property type="project" value="MGI"/>
</dbReference>
<dbReference type="GO" id="GO:0097553">
    <property type="term" value="P:calcium ion transmembrane import into cytosol"/>
    <property type="evidence" value="ECO:0000250"/>
    <property type="project" value="UniProtKB"/>
</dbReference>
<dbReference type="GO" id="GO:0006816">
    <property type="term" value="P:calcium ion transport"/>
    <property type="evidence" value="ECO:0000315"/>
    <property type="project" value="MGI"/>
</dbReference>
<dbReference type="GO" id="GO:0007268">
    <property type="term" value="P:chemical synaptic transmission"/>
    <property type="evidence" value="ECO:0000315"/>
    <property type="project" value="MGI"/>
</dbReference>
<dbReference type="GO" id="GO:0050966">
    <property type="term" value="P:detection of mechanical stimulus involved in sensory perception of pain"/>
    <property type="evidence" value="ECO:0000315"/>
    <property type="project" value="MGI"/>
</dbReference>
<dbReference type="GO" id="GO:0060079">
    <property type="term" value="P:excitatory postsynaptic potential"/>
    <property type="evidence" value="ECO:0000315"/>
    <property type="project" value="MGI"/>
</dbReference>
<dbReference type="GO" id="GO:0042596">
    <property type="term" value="P:fear response"/>
    <property type="evidence" value="ECO:0000315"/>
    <property type="project" value="MGI"/>
</dbReference>
<dbReference type="GO" id="GO:0001701">
    <property type="term" value="P:in utero embryonic development"/>
    <property type="evidence" value="ECO:0000315"/>
    <property type="project" value="MGI"/>
</dbReference>
<dbReference type="GO" id="GO:0035235">
    <property type="term" value="P:ionotropic glutamate receptor signaling pathway"/>
    <property type="evidence" value="ECO:0000266"/>
    <property type="project" value="ComplexPortal"/>
</dbReference>
<dbReference type="GO" id="GO:0007612">
    <property type="term" value="P:learning"/>
    <property type="evidence" value="ECO:0000314"/>
    <property type="project" value="MGI"/>
</dbReference>
<dbReference type="GO" id="GO:0007611">
    <property type="term" value="P:learning or memory"/>
    <property type="evidence" value="ECO:0000304"/>
    <property type="project" value="UniProtKB"/>
</dbReference>
<dbReference type="GO" id="GO:0060291">
    <property type="term" value="P:long-term synaptic potentiation"/>
    <property type="evidence" value="ECO:0000315"/>
    <property type="project" value="MGI"/>
</dbReference>
<dbReference type="GO" id="GO:0007613">
    <property type="term" value="P:memory"/>
    <property type="evidence" value="ECO:0000314"/>
    <property type="project" value="MGI"/>
</dbReference>
<dbReference type="GO" id="GO:0098655">
    <property type="term" value="P:monoatomic cation transmembrane transport"/>
    <property type="evidence" value="ECO:0000250"/>
    <property type="project" value="ComplexPortal"/>
</dbReference>
<dbReference type="GO" id="GO:0006812">
    <property type="term" value="P:monoatomic cation transport"/>
    <property type="evidence" value="ECO:0000316"/>
    <property type="project" value="MGI"/>
</dbReference>
<dbReference type="GO" id="GO:1902951">
    <property type="term" value="P:negative regulation of dendritic spine maintenance"/>
    <property type="evidence" value="ECO:0000316"/>
    <property type="project" value="ARUK-UCL"/>
</dbReference>
<dbReference type="GO" id="GO:2000463">
    <property type="term" value="P:positive regulation of excitatory postsynaptic potential"/>
    <property type="evidence" value="ECO:0000266"/>
    <property type="project" value="ComplexPortal"/>
</dbReference>
<dbReference type="GO" id="GO:0051968">
    <property type="term" value="P:positive regulation of synaptic transmission, glutamatergic"/>
    <property type="evidence" value="ECO:0000266"/>
    <property type="project" value="ComplexPortal"/>
</dbReference>
<dbReference type="GO" id="GO:0051290">
    <property type="term" value="P:protein heterotetramerization"/>
    <property type="evidence" value="ECO:0000250"/>
    <property type="project" value="UniProtKB"/>
</dbReference>
<dbReference type="GO" id="GO:0141161">
    <property type="term" value="P:regulation of cAMP/PKA signal transduction"/>
    <property type="evidence" value="ECO:0000315"/>
    <property type="project" value="MGI"/>
</dbReference>
<dbReference type="GO" id="GO:1904062">
    <property type="term" value="P:regulation of monoatomic cation transmembrane transport"/>
    <property type="evidence" value="ECO:0000250"/>
    <property type="project" value="ComplexPortal"/>
</dbReference>
<dbReference type="GO" id="GO:0048168">
    <property type="term" value="P:regulation of neuronal synaptic plasticity"/>
    <property type="evidence" value="ECO:0000304"/>
    <property type="project" value="UniProtKB"/>
</dbReference>
<dbReference type="GO" id="GO:0060078">
    <property type="term" value="P:regulation of postsynaptic membrane potential"/>
    <property type="evidence" value="ECO:0000315"/>
    <property type="project" value="MGI"/>
</dbReference>
<dbReference type="GO" id="GO:0048167">
    <property type="term" value="P:regulation of synaptic plasticity"/>
    <property type="evidence" value="ECO:0000315"/>
    <property type="project" value="UniProtKB"/>
</dbReference>
<dbReference type="GO" id="GO:0045471">
    <property type="term" value="P:response to ethanol"/>
    <property type="evidence" value="ECO:0000315"/>
    <property type="project" value="MGI"/>
</dbReference>
<dbReference type="GO" id="GO:0007423">
    <property type="term" value="P:sensory organ development"/>
    <property type="evidence" value="ECO:0000315"/>
    <property type="project" value="MGI"/>
</dbReference>
<dbReference type="GO" id="GO:0001964">
    <property type="term" value="P:startle response"/>
    <property type="evidence" value="ECO:0000315"/>
    <property type="project" value="MGI"/>
</dbReference>
<dbReference type="GO" id="GO:0001967">
    <property type="term" value="P:suckling behavior"/>
    <property type="evidence" value="ECO:0000315"/>
    <property type="project" value="MGI"/>
</dbReference>
<dbReference type="CDD" id="cd06378">
    <property type="entry name" value="PBP1_iGluR_NMDA_NR2"/>
    <property type="match status" value="1"/>
</dbReference>
<dbReference type="CDD" id="cd13718">
    <property type="entry name" value="PBP2_iGluR_NMDA_Nr2"/>
    <property type="match status" value="1"/>
</dbReference>
<dbReference type="DisProt" id="DP01492"/>
<dbReference type="FunFam" id="3.40.50.2300:FF:000312">
    <property type="entry name" value="Glutamate ionotropic receptor NMDA type subunit 2B"/>
    <property type="match status" value="1"/>
</dbReference>
<dbReference type="FunFam" id="1.10.287.70:FF:000199">
    <property type="entry name" value="Glutamate receptor ionotropic, NMDA 2B"/>
    <property type="match status" value="1"/>
</dbReference>
<dbReference type="FunFam" id="3.40.50.2300:FF:000020">
    <property type="entry name" value="Glutamate receptor ionotropic, NMDA 2B, putative"/>
    <property type="match status" value="1"/>
</dbReference>
<dbReference type="FunFam" id="3.40.190.10:FF:000007">
    <property type="entry name" value="Putative glutamate receptor ionotropic NMDA 2B"/>
    <property type="match status" value="1"/>
</dbReference>
<dbReference type="FunFam" id="3.40.190.10:FF:000038">
    <property type="entry name" value="Putative glutamate receptor ionotropic NMDA 2B"/>
    <property type="match status" value="1"/>
</dbReference>
<dbReference type="Gene3D" id="3.40.50.2300">
    <property type="match status" value="2"/>
</dbReference>
<dbReference type="Gene3D" id="3.40.190.10">
    <property type="entry name" value="Periplasmic binding protein-like II"/>
    <property type="match status" value="3"/>
</dbReference>
<dbReference type="InterPro" id="IPR001828">
    <property type="entry name" value="ANF_lig-bd_rcpt"/>
</dbReference>
<dbReference type="InterPro" id="IPR019594">
    <property type="entry name" value="Glu/Gly-bd"/>
</dbReference>
<dbReference type="InterPro" id="IPR001508">
    <property type="entry name" value="Iono_Glu_rcpt_met"/>
</dbReference>
<dbReference type="InterPro" id="IPR015683">
    <property type="entry name" value="Ionotropic_Glu_rcpt"/>
</dbReference>
<dbReference type="InterPro" id="IPR001320">
    <property type="entry name" value="Iontro_rcpt_C"/>
</dbReference>
<dbReference type="InterPro" id="IPR018884">
    <property type="entry name" value="NMDAR2_C"/>
</dbReference>
<dbReference type="InterPro" id="IPR028082">
    <property type="entry name" value="Peripla_BP_I"/>
</dbReference>
<dbReference type="PANTHER" id="PTHR18966">
    <property type="entry name" value="IONOTROPIC GLUTAMATE RECEPTOR"/>
    <property type="match status" value="1"/>
</dbReference>
<dbReference type="Pfam" id="PF01094">
    <property type="entry name" value="ANF_receptor"/>
    <property type="match status" value="1"/>
</dbReference>
<dbReference type="Pfam" id="PF00060">
    <property type="entry name" value="Lig_chan"/>
    <property type="match status" value="1"/>
</dbReference>
<dbReference type="Pfam" id="PF10613">
    <property type="entry name" value="Lig_chan-Glu_bd"/>
    <property type="match status" value="1"/>
</dbReference>
<dbReference type="Pfam" id="PF10565">
    <property type="entry name" value="NMDAR2_C"/>
    <property type="match status" value="1"/>
</dbReference>
<dbReference type="PRINTS" id="PR00177">
    <property type="entry name" value="NMDARECEPTOR"/>
</dbReference>
<dbReference type="SMART" id="SM00918">
    <property type="entry name" value="Lig_chan-Glu_bd"/>
    <property type="match status" value="1"/>
</dbReference>
<dbReference type="SMART" id="SM00079">
    <property type="entry name" value="PBPe"/>
    <property type="match status" value="1"/>
</dbReference>
<dbReference type="SUPFAM" id="SSF53822">
    <property type="entry name" value="Periplasmic binding protein-like I"/>
    <property type="match status" value="1"/>
</dbReference>
<dbReference type="SUPFAM" id="SSF53850">
    <property type="entry name" value="Periplasmic binding protein-like II"/>
    <property type="match status" value="1"/>
</dbReference>